<gene>
    <name evidence="1" type="primary">luxS</name>
    <name type="ordered locus">Csal_2049</name>
</gene>
<proteinExistence type="inferred from homology"/>
<organism>
    <name type="scientific">Chromohalobacter salexigens (strain ATCC BAA-138 / DSM 3043 / CIP 106854 / NCIMB 13768 / 1H11)</name>
    <dbReference type="NCBI Taxonomy" id="290398"/>
    <lineage>
        <taxon>Bacteria</taxon>
        <taxon>Pseudomonadati</taxon>
        <taxon>Pseudomonadota</taxon>
        <taxon>Gammaproteobacteria</taxon>
        <taxon>Oceanospirillales</taxon>
        <taxon>Halomonadaceae</taxon>
        <taxon>Chromohalobacter</taxon>
    </lineage>
</organism>
<dbReference type="EC" id="4.4.1.21" evidence="1"/>
<dbReference type="EMBL" id="CP000285">
    <property type="protein sequence ID" value="ABE59400.1"/>
    <property type="molecule type" value="Genomic_DNA"/>
</dbReference>
<dbReference type="RefSeq" id="WP_011507346.1">
    <property type="nucleotide sequence ID" value="NC_007963.1"/>
</dbReference>
<dbReference type="SMR" id="Q1QVV8"/>
<dbReference type="STRING" id="290398.Csal_2049"/>
<dbReference type="GeneID" id="95334764"/>
<dbReference type="KEGG" id="csa:Csal_2049"/>
<dbReference type="eggNOG" id="COG1854">
    <property type="taxonomic scope" value="Bacteria"/>
</dbReference>
<dbReference type="HOGENOM" id="CLU_107531_0_0_6"/>
<dbReference type="OrthoDB" id="9788129at2"/>
<dbReference type="Proteomes" id="UP000000239">
    <property type="component" value="Chromosome"/>
</dbReference>
<dbReference type="GO" id="GO:0005506">
    <property type="term" value="F:iron ion binding"/>
    <property type="evidence" value="ECO:0007669"/>
    <property type="project" value="InterPro"/>
</dbReference>
<dbReference type="GO" id="GO:0043768">
    <property type="term" value="F:S-ribosylhomocysteine lyase activity"/>
    <property type="evidence" value="ECO:0007669"/>
    <property type="project" value="UniProtKB-UniRule"/>
</dbReference>
<dbReference type="GO" id="GO:0009372">
    <property type="term" value="P:quorum sensing"/>
    <property type="evidence" value="ECO:0007669"/>
    <property type="project" value="UniProtKB-UniRule"/>
</dbReference>
<dbReference type="Gene3D" id="3.30.1360.80">
    <property type="entry name" value="S-ribosylhomocysteinase (LuxS)"/>
    <property type="match status" value="1"/>
</dbReference>
<dbReference type="HAMAP" id="MF_00091">
    <property type="entry name" value="LuxS"/>
    <property type="match status" value="1"/>
</dbReference>
<dbReference type="InterPro" id="IPR037005">
    <property type="entry name" value="LuxS_sf"/>
</dbReference>
<dbReference type="InterPro" id="IPR011249">
    <property type="entry name" value="Metalloenz_LuxS/M16"/>
</dbReference>
<dbReference type="InterPro" id="IPR003815">
    <property type="entry name" value="S-ribosylhomocysteinase"/>
</dbReference>
<dbReference type="NCBIfam" id="NF002604">
    <property type="entry name" value="PRK02260.1-4"/>
    <property type="match status" value="1"/>
</dbReference>
<dbReference type="PANTHER" id="PTHR35799">
    <property type="entry name" value="S-RIBOSYLHOMOCYSTEINE LYASE"/>
    <property type="match status" value="1"/>
</dbReference>
<dbReference type="PANTHER" id="PTHR35799:SF1">
    <property type="entry name" value="S-RIBOSYLHOMOCYSTEINE LYASE"/>
    <property type="match status" value="1"/>
</dbReference>
<dbReference type="Pfam" id="PF02664">
    <property type="entry name" value="LuxS"/>
    <property type="match status" value="1"/>
</dbReference>
<dbReference type="PIRSF" id="PIRSF006160">
    <property type="entry name" value="AI2"/>
    <property type="match status" value="1"/>
</dbReference>
<dbReference type="PRINTS" id="PR01487">
    <property type="entry name" value="LUXSPROTEIN"/>
</dbReference>
<dbReference type="SUPFAM" id="SSF63411">
    <property type="entry name" value="LuxS/MPP-like metallohydrolase"/>
    <property type="match status" value="1"/>
</dbReference>
<keyword id="KW-0071">Autoinducer synthesis</keyword>
<keyword id="KW-0408">Iron</keyword>
<keyword id="KW-0456">Lyase</keyword>
<keyword id="KW-0479">Metal-binding</keyword>
<keyword id="KW-0673">Quorum sensing</keyword>
<keyword id="KW-1185">Reference proteome</keyword>
<name>LUXS_CHRSD</name>
<evidence type="ECO:0000255" key="1">
    <source>
        <dbReference type="HAMAP-Rule" id="MF_00091"/>
    </source>
</evidence>
<comment type="function">
    <text evidence="1">Involved in the synthesis of autoinducer 2 (AI-2) which is secreted by bacteria and is used to communicate both the cell density and the metabolic potential of the environment. The regulation of gene expression in response to changes in cell density is called quorum sensing. Catalyzes the transformation of S-ribosylhomocysteine (RHC) to homocysteine (HC) and 4,5-dihydroxy-2,3-pentadione (DPD).</text>
</comment>
<comment type="catalytic activity">
    <reaction evidence="1">
        <text>S-(5-deoxy-D-ribos-5-yl)-L-homocysteine = (S)-4,5-dihydroxypentane-2,3-dione + L-homocysteine</text>
        <dbReference type="Rhea" id="RHEA:17753"/>
        <dbReference type="ChEBI" id="CHEBI:29484"/>
        <dbReference type="ChEBI" id="CHEBI:58195"/>
        <dbReference type="ChEBI" id="CHEBI:58199"/>
        <dbReference type="EC" id="4.4.1.21"/>
    </reaction>
</comment>
<comment type="cofactor">
    <cofactor evidence="1">
        <name>Fe cation</name>
        <dbReference type="ChEBI" id="CHEBI:24875"/>
    </cofactor>
    <text evidence="1">Binds 1 Fe cation per subunit.</text>
</comment>
<comment type="subunit">
    <text evidence="1">Homodimer.</text>
</comment>
<comment type="similarity">
    <text evidence="1">Belongs to the LuxS family.</text>
</comment>
<reference key="1">
    <citation type="journal article" date="2011" name="Stand. Genomic Sci.">
        <title>Complete genome sequence of the halophilic and highly halotolerant Chromohalobacter salexigens type strain (1H11(T)).</title>
        <authorList>
            <person name="Copeland A."/>
            <person name="O'Connor K."/>
            <person name="Lucas S."/>
            <person name="Lapidus A."/>
            <person name="Berry K.W."/>
            <person name="Detter J.C."/>
            <person name="Del Rio T.G."/>
            <person name="Hammon N."/>
            <person name="Dalin E."/>
            <person name="Tice H."/>
            <person name="Pitluck S."/>
            <person name="Bruce D."/>
            <person name="Goodwin L."/>
            <person name="Han C."/>
            <person name="Tapia R."/>
            <person name="Saunders E."/>
            <person name="Schmutz J."/>
            <person name="Brettin T."/>
            <person name="Larimer F."/>
            <person name="Land M."/>
            <person name="Hauser L."/>
            <person name="Vargas C."/>
            <person name="Nieto J.J."/>
            <person name="Kyrpides N.C."/>
            <person name="Ivanova N."/>
            <person name="Goker M."/>
            <person name="Klenk H.P."/>
            <person name="Csonka L.N."/>
            <person name="Woyke T."/>
        </authorList>
    </citation>
    <scope>NUCLEOTIDE SEQUENCE [LARGE SCALE GENOMIC DNA]</scope>
    <source>
        <strain>ATCC BAA-138 / DSM 3043 / CIP 106854 / NCIMB 13768 / 1H11</strain>
    </source>
</reference>
<accession>Q1QVV8</accession>
<feature type="chain" id="PRO_0000297989" description="S-ribosylhomocysteine lyase">
    <location>
        <begin position="1"/>
        <end position="155"/>
    </location>
</feature>
<feature type="binding site" evidence="1">
    <location>
        <position position="58"/>
    </location>
    <ligand>
        <name>Fe cation</name>
        <dbReference type="ChEBI" id="CHEBI:24875"/>
    </ligand>
</feature>
<feature type="binding site" evidence="1">
    <location>
        <position position="62"/>
    </location>
    <ligand>
        <name>Fe cation</name>
        <dbReference type="ChEBI" id="CHEBI:24875"/>
    </ligand>
</feature>
<feature type="binding site" evidence="1">
    <location>
        <position position="125"/>
    </location>
    <ligand>
        <name>Fe cation</name>
        <dbReference type="ChEBI" id="CHEBI:24875"/>
    </ligand>
</feature>
<sequence length="155" mass="17462">MSDKEMNVESFNLDHTKVKAPYVRLAGIKTGDHGDAIHKYDLRICQPNKAHMEMPALHSLEHLMAELSRNHTDKMLDISPMGCQTGFYVTLINHDDYDDVLDLIDKTLNDVLVAKEVPACNEMQCGWAASHSLEGAQALARDLLAKRNEWNQVFA</sequence>
<protein>
    <recommendedName>
        <fullName evidence="1">S-ribosylhomocysteine lyase</fullName>
        <ecNumber evidence="1">4.4.1.21</ecNumber>
    </recommendedName>
    <alternativeName>
        <fullName evidence="1">AI-2 synthesis protein</fullName>
    </alternativeName>
    <alternativeName>
        <fullName evidence="1">Autoinducer-2 production protein LuxS</fullName>
    </alternativeName>
</protein>